<feature type="initiator methionine" description="Removed" evidence="1">
    <location>
        <position position="1"/>
    </location>
</feature>
<feature type="chain" id="PRO_0000389372" description="Small ribosomal subunit protein eS1">
    <location>
        <begin position="2"/>
        <end position="256"/>
    </location>
</feature>
<feature type="modified residue" description="N-acetylalanine; partial" evidence="1">
    <location>
        <position position="2"/>
    </location>
</feature>
<dbReference type="EMBL" id="AACS02000005">
    <property type="protein sequence ID" value="EAU84719.1"/>
    <property type="molecule type" value="Genomic_DNA"/>
</dbReference>
<dbReference type="RefSeq" id="XP_001837102.1">
    <property type="nucleotide sequence ID" value="XM_001837050.2"/>
</dbReference>
<dbReference type="SMR" id="A8NX92"/>
<dbReference type="FunCoup" id="A8NX92">
    <property type="interactions" value="493"/>
</dbReference>
<dbReference type="STRING" id="240176.A8NX92"/>
<dbReference type="GeneID" id="6013658"/>
<dbReference type="KEGG" id="cci:CC1G_00238"/>
<dbReference type="VEuPathDB" id="FungiDB:CC1G_00238"/>
<dbReference type="eggNOG" id="KOG1628">
    <property type="taxonomic scope" value="Eukaryota"/>
</dbReference>
<dbReference type="HOGENOM" id="CLU_062507_0_0_1"/>
<dbReference type="InParanoid" id="A8NX92"/>
<dbReference type="OMA" id="TRFKGHE"/>
<dbReference type="OrthoDB" id="9834376at2759"/>
<dbReference type="Proteomes" id="UP000001861">
    <property type="component" value="Unassembled WGS sequence"/>
</dbReference>
<dbReference type="GO" id="GO:0022627">
    <property type="term" value="C:cytosolic small ribosomal subunit"/>
    <property type="evidence" value="ECO:0007669"/>
    <property type="project" value="UniProtKB-UniRule"/>
</dbReference>
<dbReference type="GO" id="GO:0003735">
    <property type="term" value="F:structural constituent of ribosome"/>
    <property type="evidence" value="ECO:0007669"/>
    <property type="project" value="UniProtKB-UniRule"/>
</dbReference>
<dbReference type="GO" id="GO:0006412">
    <property type="term" value="P:translation"/>
    <property type="evidence" value="ECO:0007669"/>
    <property type="project" value="UniProtKB-UniRule"/>
</dbReference>
<dbReference type="HAMAP" id="MF_03122">
    <property type="entry name" value="Ribosomal_eS1_euk"/>
    <property type="match status" value="1"/>
</dbReference>
<dbReference type="InterPro" id="IPR001593">
    <property type="entry name" value="Ribosomal_eS1"/>
</dbReference>
<dbReference type="InterPro" id="IPR018281">
    <property type="entry name" value="Ribosomal_eS1_CS"/>
</dbReference>
<dbReference type="InterPro" id="IPR027500">
    <property type="entry name" value="Ribosomal_eS1_euk"/>
</dbReference>
<dbReference type="PANTHER" id="PTHR11830">
    <property type="entry name" value="40S RIBOSOMAL PROTEIN S3A"/>
    <property type="match status" value="1"/>
</dbReference>
<dbReference type="Pfam" id="PF01015">
    <property type="entry name" value="Ribosomal_S3Ae"/>
    <property type="match status" value="1"/>
</dbReference>
<dbReference type="SMART" id="SM01397">
    <property type="entry name" value="Ribosomal_S3Ae"/>
    <property type="match status" value="1"/>
</dbReference>
<dbReference type="PROSITE" id="PS01191">
    <property type="entry name" value="RIBOSOMAL_S3AE"/>
    <property type="match status" value="1"/>
</dbReference>
<reference key="1">
    <citation type="journal article" date="2010" name="Proc. Natl. Acad. Sci. U.S.A.">
        <title>Insights into evolution of multicellular fungi from the assembled chromosomes of the mushroom Coprinopsis cinerea (Coprinus cinereus).</title>
        <authorList>
            <person name="Stajich J.E."/>
            <person name="Wilke S.K."/>
            <person name="Ahren D."/>
            <person name="Au C.H."/>
            <person name="Birren B.W."/>
            <person name="Borodovsky M."/>
            <person name="Burns C."/>
            <person name="Canbaeck B."/>
            <person name="Casselton L.A."/>
            <person name="Cheng C.K."/>
            <person name="Deng J."/>
            <person name="Dietrich F.S."/>
            <person name="Fargo D.C."/>
            <person name="Farman M.L."/>
            <person name="Gathman A.C."/>
            <person name="Goldberg J."/>
            <person name="Guigo R."/>
            <person name="Hoegger P.J."/>
            <person name="Hooker J.B."/>
            <person name="Huggins A."/>
            <person name="James T.Y."/>
            <person name="Kamada T."/>
            <person name="Kilaru S."/>
            <person name="Kodira C."/>
            <person name="Kuees U."/>
            <person name="Kupfer D."/>
            <person name="Kwan H.S."/>
            <person name="Lomsadze A."/>
            <person name="Li W."/>
            <person name="Lilly W.W."/>
            <person name="Ma L.-J."/>
            <person name="Mackey A.J."/>
            <person name="Manning G."/>
            <person name="Martin F."/>
            <person name="Muraguchi H."/>
            <person name="Natvig D.O."/>
            <person name="Palmerini H."/>
            <person name="Ramesh M.A."/>
            <person name="Rehmeyer C.J."/>
            <person name="Roe B.A."/>
            <person name="Shenoy N."/>
            <person name="Stanke M."/>
            <person name="Ter-Hovhannisyan V."/>
            <person name="Tunlid A."/>
            <person name="Velagapudi R."/>
            <person name="Vision T.J."/>
            <person name="Zeng Q."/>
            <person name="Zolan M.E."/>
            <person name="Pukkila P.J."/>
        </authorList>
    </citation>
    <scope>NUCLEOTIDE SEQUENCE [LARGE SCALE GENOMIC DNA]</scope>
    <source>
        <strain>Okayama-7 / 130 / ATCC MYA-4618 / FGSC 9003</strain>
    </source>
</reference>
<evidence type="ECO:0000255" key="1">
    <source>
        <dbReference type="HAMAP-Rule" id="MF_03122"/>
    </source>
</evidence>
<evidence type="ECO:0000305" key="2"/>
<keyword id="KW-0007">Acetylation</keyword>
<keyword id="KW-0963">Cytoplasm</keyword>
<keyword id="KW-1185">Reference proteome</keyword>
<keyword id="KW-0687">Ribonucleoprotein</keyword>
<keyword id="KW-0689">Ribosomal protein</keyword>
<comment type="subunit">
    <text evidence="1">Component of the small ribosomal subunit. Mature ribosomes consist of a small (40S) and a large (60S) subunit. The 40S subunit contains about 33 different proteins and 1 molecule of RNA (18S). The 60S subunit contains about 49 different proteins and 3 molecules of RNA (25S, 5.8S and 5S).</text>
</comment>
<comment type="subcellular location">
    <subcellularLocation>
        <location evidence="1">Cytoplasm</location>
    </subcellularLocation>
</comment>
<comment type="similarity">
    <text evidence="1">Belongs to the eukaryotic ribosomal protein eS1 family.</text>
</comment>
<organism>
    <name type="scientific">Coprinopsis cinerea (strain Okayama-7 / 130 / ATCC MYA-4618 / FGSC 9003)</name>
    <name type="common">Inky cap fungus</name>
    <name type="synonym">Hormographiella aspergillata</name>
    <dbReference type="NCBI Taxonomy" id="240176"/>
    <lineage>
        <taxon>Eukaryota</taxon>
        <taxon>Fungi</taxon>
        <taxon>Dikarya</taxon>
        <taxon>Basidiomycota</taxon>
        <taxon>Agaricomycotina</taxon>
        <taxon>Agaricomycetes</taxon>
        <taxon>Agaricomycetidae</taxon>
        <taxon>Agaricales</taxon>
        <taxon>Agaricineae</taxon>
        <taxon>Psathyrellaceae</taxon>
        <taxon>Coprinopsis</taxon>
    </lineage>
</organism>
<sequence length="256" mass="29446">MAVGKNKRLSKGKKGLKKKVVDPFTRKDWYDIKAPSIFETRNVGKTLVNRSQGLKNANDSLRGRIIEVSLADLNKDEEQSFRKIKLRVDEIQGRNCLTNFHGMDFTSDKLRSLVRKWQTLVEAHVDVKTTDGYLLRLFAIGFTKRRPTQVKKTTYAQTAQVRELRKKMFEIITREATSCDLKELVQKFVPEAIGREIEKASRSIYPLQNVYIRKAKILKAPKFDVSKLLELHGDSTDESGTRVTKDFKEPEVLESV</sequence>
<name>RS3A_COPC7</name>
<protein>
    <recommendedName>
        <fullName evidence="1">Small ribosomal subunit protein eS1</fullName>
    </recommendedName>
    <alternativeName>
        <fullName evidence="2">40S ribosomal protein S1</fullName>
    </alternativeName>
</protein>
<proteinExistence type="inferred from homology"/>
<gene>
    <name evidence="1" type="primary">RPS1</name>
    <name type="ORF">CC1G_00238</name>
</gene>
<accession>A8NX92</accession>